<evidence type="ECO:0000250" key="1"/>
<evidence type="ECO:0000255" key="2">
    <source>
        <dbReference type="PROSITE-ProRule" id="PRU00042"/>
    </source>
</evidence>
<evidence type="ECO:0000255" key="3">
    <source>
        <dbReference type="PROSITE-ProRule" id="PRU00190"/>
    </source>
</evidence>
<evidence type="ECO:0000256" key="4">
    <source>
        <dbReference type="SAM" id="MobiDB-lite"/>
    </source>
</evidence>
<evidence type="ECO:0000269" key="5">
    <source>
    </source>
</evidence>
<evidence type="ECO:0000269" key="6">
    <source>
    </source>
</evidence>
<evidence type="ECO:0000269" key="7">
    <source>
    </source>
</evidence>
<evidence type="ECO:0000269" key="8">
    <source>
    </source>
</evidence>
<evidence type="ECO:0000305" key="9"/>
<evidence type="ECO:0007829" key="10">
    <source>
        <dbReference type="PDB" id="5ECJ"/>
    </source>
</evidence>
<reference key="1">
    <citation type="journal article" date="2009" name="PLoS Biol.">
        <title>Lineage-specific biology revealed by a finished genome assembly of the mouse.</title>
        <authorList>
            <person name="Church D.M."/>
            <person name="Goodstadt L."/>
            <person name="Hillier L.W."/>
            <person name="Zody M.C."/>
            <person name="Goldstein S."/>
            <person name="She X."/>
            <person name="Bult C.J."/>
            <person name="Agarwala R."/>
            <person name="Cherry J.L."/>
            <person name="DiCuccio M."/>
            <person name="Hlavina W."/>
            <person name="Kapustin Y."/>
            <person name="Meric P."/>
            <person name="Maglott D."/>
            <person name="Birtle Z."/>
            <person name="Marques A.C."/>
            <person name="Graves T."/>
            <person name="Zhou S."/>
            <person name="Teague B."/>
            <person name="Potamousis K."/>
            <person name="Churas C."/>
            <person name="Place M."/>
            <person name="Herschleb J."/>
            <person name="Runnheim R."/>
            <person name="Forrest D."/>
            <person name="Amos-Landgraf J."/>
            <person name="Schwartz D.C."/>
            <person name="Cheng Z."/>
            <person name="Lindblad-Toh K."/>
            <person name="Eichler E.E."/>
            <person name="Ponting C.P."/>
        </authorList>
    </citation>
    <scope>NUCLEOTIDE SEQUENCE [LARGE SCALE GENOMIC DNA]</scope>
    <source>
        <strain>C57BL/6J</strain>
    </source>
</reference>
<reference key="2">
    <citation type="journal article" date="2005" name="Science">
        <title>The transcriptional landscape of the mammalian genome.</title>
        <authorList>
            <person name="Carninci P."/>
            <person name="Kasukawa T."/>
            <person name="Katayama S."/>
            <person name="Gough J."/>
            <person name="Frith M.C."/>
            <person name="Maeda N."/>
            <person name="Oyama R."/>
            <person name="Ravasi T."/>
            <person name="Lenhard B."/>
            <person name="Wells C."/>
            <person name="Kodzius R."/>
            <person name="Shimokawa K."/>
            <person name="Bajic V.B."/>
            <person name="Brenner S.E."/>
            <person name="Batalov S."/>
            <person name="Forrest A.R."/>
            <person name="Zavolan M."/>
            <person name="Davis M.J."/>
            <person name="Wilming L.G."/>
            <person name="Aidinis V."/>
            <person name="Allen J.E."/>
            <person name="Ambesi-Impiombato A."/>
            <person name="Apweiler R."/>
            <person name="Aturaliya R.N."/>
            <person name="Bailey T.L."/>
            <person name="Bansal M."/>
            <person name="Baxter L."/>
            <person name="Beisel K.W."/>
            <person name="Bersano T."/>
            <person name="Bono H."/>
            <person name="Chalk A.M."/>
            <person name="Chiu K.P."/>
            <person name="Choudhary V."/>
            <person name="Christoffels A."/>
            <person name="Clutterbuck D.R."/>
            <person name="Crowe M.L."/>
            <person name="Dalla E."/>
            <person name="Dalrymple B.P."/>
            <person name="de Bono B."/>
            <person name="Della Gatta G."/>
            <person name="di Bernardo D."/>
            <person name="Down T."/>
            <person name="Engstrom P."/>
            <person name="Fagiolini M."/>
            <person name="Faulkner G."/>
            <person name="Fletcher C.F."/>
            <person name="Fukushima T."/>
            <person name="Furuno M."/>
            <person name="Futaki S."/>
            <person name="Gariboldi M."/>
            <person name="Georgii-Hemming P."/>
            <person name="Gingeras T.R."/>
            <person name="Gojobori T."/>
            <person name="Green R.E."/>
            <person name="Gustincich S."/>
            <person name="Harbers M."/>
            <person name="Hayashi Y."/>
            <person name="Hensch T.K."/>
            <person name="Hirokawa N."/>
            <person name="Hill D."/>
            <person name="Huminiecki L."/>
            <person name="Iacono M."/>
            <person name="Ikeo K."/>
            <person name="Iwama A."/>
            <person name="Ishikawa T."/>
            <person name="Jakt M."/>
            <person name="Kanapin A."/>
            <person name="Katoh M."/>
            <person name="Kawasawa Y."/>
            <person name="Kelso J."/>
            <person name="Kitamura H."/>
            <person name="Kitano H."/>
            <person name="Kollias G."/>
            <person name="Krishnan S.P."/>
            <person name="Kruger A."/>
            <person name="Kummerfeld S.K."/>
            <person name="Kurochkin I.V."/>
            <person name="Lareau L.F."/>
            <person name="Lazarevic D."/>
            <person name="Lipovich L."/>
            <person name="Liu J."/>
            <person name="Liuni S."/>
            <person name="McWilliam S."/>
            <person name="Madan Babu M."/>
            <person name="Madera M."/>
            <person name="Marchionni L."/>
            <person name="Matsuda H."/>
            <person name="Matsuzawa S."/>
            <person name="Miki H."/>
            <person name="Mignone F."/>
            <person name="Miyake S."/>
            <person name="Morris K."/>
            <person name="Mottagui-Tabar S."/>
            <person name="Mulder N."/>
            <person name="Nakano N."/>
            <person name="Nakauchi H."/>
            <person name="Ng P."/>
            <person name="Nilsson R."/>
            <person name="Nishiguchi S."/>
            <person name="Nishikawa S."/>
            <person name="Nori F."/>
            <person name="Ohara O."/>
            <person name="Okazaki Y."/>
            <person name="Orlando V."/>
            <person name="Pang K.C."/>
            <person name="Pavan W.J."/>
            <person name="Pavesi G."/>
            <person name="Pesole G."/>
            <person name="Petrovsky N."/>
            <person name="Piazza S."/>
            <person name="Reed J."/>
            <person name="Reid J.F."/>
            <person name="Ring B.Z."/>
            <person name="Ringwald M."/>
            <person name="Rost B."/>
            <person name="Ruan Y."/>
            <person name="Salzberg S.L."/>
            <person name="Sandelin A."/>
            <person name="Schneider C."/>
            <person name="Schoenbach C."/>
            <person name="Sekiguchi K."/>
            <person name="Semple C.A."/>
            <person name="Seno S."/>
            <person name="Sessa L."/>
            <person name="Sheng Y."/>
            <person name="Shibata Y."/>
            <person name="Shimada H."/>
            <person name="Shimada K."/>
            <person name="Silva D."/>
            <person name="Sinclair B."/>
            <person name="Sperling S."/>
            <person name="Stupka E."/>
            <person name="Sugiura K."/>
            <person name="Sultana R."/>
            <person name="Takenaka Y."/>
            <person name="Taki K."/>
            <person name="Tammoja K."/>
            <person name="Tan S.L."/>
            <person name="Tang S."/>
            <person name="Taylor M.S."/>
            <person name="Tegner J."/>
            <person name="Teichmann S.A."/>
            <person name="Ueda H.R."/>
            <person name="van Nimwegen E."/>
            <person name="Verardo R."/>
            <person name="Wei C.L."/>
            <person name="Yagi K."/>
            <person name="Yamanishi H."/>
            <person name="Zabarovsky E."/>
            <person name="Zhu S."/>
            <person name="Zimmer A."/>
            <person name="Hide W."/>
            <person name="Bult C."/>
            <person name="Grimmond S.M."/>
            <person name="Teasdale R.D."/>
            <person name="Liu E.T."/>
            <person name="Brusic V."/>
            <person name="Quackenbush J."/>
            <person name="Wahlestedt C."/>
            <person name="Mattick J.S."/>
            <person name="Hume D.A."/>
            <person name="Kai C."/>
            <person name="Sasaki D."/>
            <person name="Tomaru Y."/>
            <person name="Fukuda S."/>
            <person name="Kanamori-Katayama M."/>
            <person name="Suzuki M."/>
            <person name="Aoki J."/>
            <person name="Arakawa T."/>
            <person name="Iida J."/>
            <person name="Imamura K."/>
            <person name="Itoh M."/>
            <person name="Kato T."/>
            <person name="Kawaji H."/>
            <person name="Kawagashira N."/>
            <person name="Kawashima T."/>
            <person name="Kojima M."/>
            <person name="Kondo S."/>
            <person name="Konno H."/>
            <person name="Nakano K."/>
            <person name="Ninomiya N."/>
            <person name="Nishio T."/>
            <person name="Okada M."/>
            <person name="Plessy C."/>
            <person name="Shibata K."/>
            <person name="Shiraki T."/>
            <person name="Suzuki S."/>
            <person name="Tagami M."/>
            <person name="Waki K."/>
            <person name="Watahiki A."/>
            <person name="Okamura-Oho Y."/>
            <person name="Suzuki H."/>
            <person name="Kawai J."/>
            <person name="Hayashizaki Y."/>
        </authorList>
    </citation>
    <scope>NUCLEOTIDE SEQUENCE [LARGE SCALE MRNA] OF 50-561</scope>
</reference>
<reference key="3">
    <citation type="journal article" date="2008" name="Nat. Genet.">
        <title>Critical function of Prdm14 for the establishment of the germ cell lineage in mice.</title>
        <authorList>
            <person name="Yamaji M."/>
            <person name="Seki Y."/>
            <person name="Kurimoto K."/>
            <person name="Yabuta Y."/>
            <person name="Yuasa M."/>
            <person name="Shigeta M."/>
            <person name="Yamanaka K."/>
            <person name="Ohinata Y."/>
            <person name="Saitou M."/>
        </authorList>
    </citation>
    <scope>FUNCTION</scope>
    <scope>TISSUE SPECIFICITY</scope>
    <scope>DEVELOPMENTAL STAGE</scope>
    <scope>DISRUPTION PHENOTYPE</scope>
</reference>
<reference key="4">
    <citation type="journal article" date="2010" name="Nature">
        <title>A genome-wide RNAi screen reveals determinants of human embryonic stem cell identity.</title>
        <authorList>
            <person name="Chia N.Y."/>
            <person name="Chan Y.S."/>
            <person name="Feng B."/>
            <person name="Lu X."/>
            <person name="Orlov Y.L."/>
            <person name="Moreau D."/>
            <person name="Kumar P."/>
            <person name="Yang L."/>
            <person name="Jiang J."/>
            <person name="Lau M.S."/>
            <person name="Huss M."/>
            <person name="Soh B.S."/>
            <person name="Kraus P."/>
            <person name="Li P."/>
            <person name="Lufkin T."/>
            <person name="Lim B."/>
            <person name="Clarke N.D."/>
            <person name="Bard F."/>
            <person name="Ng H.H."/>
        </authorList>
    </citation>
    <scope>TISSUE SPECIFICITY</scope>
</reference>
<reference key="5">
    <citation type="journal article" date="2016" name="Nature">
        <title>Co-repressor CBFA2T2 regulates pluripotency and germline development.</title>
        <authorList>
            <person name="Tu S."/>
            <person name="Narendra V."/>
            <person name="Yamaji M."/>
            <person name="Vidal S.E."/>
            <person name="Rojas L.A."/>
            <person name="Wang X."/>
            <person name="Kim S.Y."/>
            <person name="Garcia B.A."/>
            <person name="Tuschl T."/>
            <person name="Stadtfeld M."/>
            <person name="Reinberg D."/>
        </authorList>
    </citation>
    <scope>INTERACTION WITH CBFA2T2</scope>
</reference>
<reference key="6">
    <citation type="journal article" date="2015" name="Elife">
        <title>ETO family protein Mtgr1 mediates Prdm14 functions in stem cell maintenance and primordial germ cell formation.</title>
        <authorList>
            <person name="Nady N."/>
            <person name="Gupta A."/>
            <person name="Ma Z."/>
            <person name="Swigut T."/>
            <person name="Koide A."/>
            <person name="Koide S."/>
            <person name="Wysocka J."/>
        </authorList>
    </citation>
    <scope>X-RAY CRYSTALLOGRAPHY (3.05 ANGSTROMS) OF 184-373 IN COMPLEX WITH CBFA2T2</scope>
    <scope>FUNCTION</scope>
    <scope>MUTAGENESIS OF TYR-339</scope>
</reference>
<accession>E9Q3T6</accession>
<accession>Q3URU1</accession>
<protein>
    <recommendedName>
        <fullName>PR domain zinc finger protein 14</fullName>
        <ecNumber>2.1.1.-</ecNumber>
    </recommendedName>
    <alternativeName>
        <fullName>PR domain-containing protein 14</fullName>
    </alternativeName>
</protein>
<dbReference type="EC" id="2.1.1.-"/>
<dbReference type="EMBL" id="AC091248">
    <property type="status" value="NOT_ANNOTATED_CDS"/>
    <property type="molecule type" value="Genomic_DNA"/>
</dbReference>
<dbReference type="EMBL" id="AK141218">
    <property type="protein sequence ID" value="BAE24596.1"/>
    <property type="molecule type" value="mRNA"/>
</dbReference>
<dbReference type="CCDS" id="CCDS48221.1"/>
<dbReference type="RefSeq" id="NP_001074678.2">
    <property type="nucleotide sequence ID" value="NM_001081209.3"/>
</dbReference>
<dbReference type="PDB" id="5ECJ">
    <property type="method" value="X-ray"/>
    <property type="resolution" value="3.05 A"/>
    <property type="chains" value="A/B=184-373"/>
</dbReference>
<dbReference type="PDBsum" id="5ECJ"/>
<dbReference type="SMR" id="E9Q3T6"/>
<dbReference type="BioGRID" id="238771">
    <property type="interactions" value="2"/>
</dbReference>
<dbReference type="DIP" id="DIP-62031N"/>
<dbReference type="FunCoup" id="E9Q3T6">
    <property type="interactions" value="1267"/>
</dbReference>
<dbReference type="IntAct" id="E9Q3T6">
    <property type="interactions" value="1"/>
</dbReference>
<dbReference type="STRING" id="10090.ENSMUSP00000044245"/>
<dbReference type="GlyGen" id="E9Q3T6">
    <property type="glycosylation" value="1 site, 1 O-linked glycan (1 site)"/>
</dbReference>
<dbReference type="iPTMnet" id="E9Q3T6"/>
<dbReference type="PhosphoSitePlus" id="E9Q3T6"/>
<dbReference type="PaxDb" id="10090-ENSMUSP00000044245"/>
<dbReference type="Antibodypedia" id="12206">
    <property type="antibodies" value="412 antibodies from 33 providers"/>
</dbReference>
<dbReference type="Ensembl" id="ENSMUST00000047577.7">
    <property type="protein sequence ID" value="ENSMUSP00000044245.7"/>
    <property type="gene ID" value="ENSMUSG00000042414.8"/>
</dbReference>
<dbReference type="GeneID" id="383491"/>
<dbReference type="KEGG" id="mmu:383491"/>
<dbReference type="UCSC" id="uc007aik.1">
    <property type="organism name" value="mouse"/>
</dbReference>
<dbReference type="AGR" id="MGI:3588194"/>
<dbReference type="CTD" id="63978"/>
<dbReference type="MGI" id="MGI:3588194">
    <property type="gene designation" value="Prdm14"/>
</dbReference>
<dbReference type="VEuPathDB" id="HostDB:ENSMUSG00000042414"/>
<dbReference type="eggNOG" id="KOG1721">
    <property type="taxonomic scope" value="Eukaryota"/>
</dbReference>
<dbReference type="GeneTree" id="ENSGT00940000159454"/>
<dbReference type="HOGENOM" id="CLU_034551_1_0_1"/>
<dbReference type="InParanoid" id="E9Q3T6"/>
<dbReference type="OMA" id="TEGYRCE"/>
<dbReference type="OrthoDB" id="3565419at2759"/>
<dbReference type="PhylomeDB" id="E9Q3T6"/>
<dbReference type="TreeFam" id="TF106412"/>
<dbReference type="BioGRID-ORCS" id="383491">
    <property type="hits" value="1 hit in 79 CRISPR screens"/>
</dbReference>
<dbReference type="PRO" id="PR:E9Q3T6"/>
<dbReference type="Proteomes" id="UP000000589">
    <property type="component" value="Chromosome 1"/>
</dbReference>
<dbReference type="RNAct" id="E9Q3T6">
    <property type="molecule type" value="protein"/>
</dbReference>
<dbReference type="Bgee" id="ENSMUSG00000042414">
    <property type="expression patterns" value="Expressed in cleaving embryo and 13 other cell types or tissues"/>
</dbReference>
<dbReference type="GO" id="GO:0005654">
    <property type="term" value="C:nucleoplasm"/>
    <property type="evidence" value="ECO:0007669"/>
    <property type="project" value="Ensembl"/>
</dbReference>
<dbReference type="GO" id="GO:0005634">
    <property type="term" value="C:nucleus"/>
    <property type="evidence" value="ECO:0000314"/>
    <property type="project" value="MGI"/>
</dbReference>
<dbReference type="GO" id="GO:0031490">
    <property type="term" value="F:chromatin DNA binding"/>
    <property type="evidence" value="ECO:0000314"/>
    <property type="project" value="MGI"/>
</dbReference>
<dbReference type="GO" id="GO:0001227">
    <property type="term" value="F:DNA-binding transcription repressor activity, RNA polymerase II-specific"/>
    <property type="evidence" value="ECO:0000305"/>
    <property type="project" value="NTNU_SB"/>
</dbReference>
<dbReference type="GO" id="GO:1990226">
    <property type="term" value="F:histone methyltransferase binding"/>
    <property type="evidence" value="ECO:0000353"/>
    <property type="project" value="MGI"/>
</dbReference>
<dbReference type="GO" id="GO:0008168">
    <property type="term" value="F:methyltransferase activity"/>
    <property type="evidence" value="ECO:0007669"/>
    <property type="project" value="UniProtKB-KW"/>
</dbReference>
<dbReference type="GO" id="GO:0141107">
    <property type="term" value="F:methyltransferase regulator activity"/>
    <property type="evidence" value="ECO:0000314"/>
    <property type="project" value="MGI"/>
</dbReference>
<dbReference type="GO" id="GO:0003723">
    <property type="term" value="F:RNA binding"/>
    <property type="evidence" value="ECO:0000314"/>
    <property type="project" value="MGI"/>
</dbReference>
<dbReference type="GO" id="GO:0000977">
    <property type="term" value="F:RNA polymerase II transcription regulatory region sequence-specific DNA binding"/>
    <property type="evidence" value="ECO:0000315"/>
    <property type="project" value="NTNU_SB"/>
</dbReference>
<dbReference type="GO" id="GO:0008270">
    <property type="term" value="F:zinc ion binding"/>
    <property type="evidence" value="ECO:0007669"/>
    <property type="project" value="UniProtKB-KW"/>
</dbReference>
<dbReference type="GO" id="GO:0001708">
    <property type="term" value="P:cell fate specification"/>
    <property type="evidence" value="ECO:0000315"/>
    <property type="project" value="MGI"/>
</dbReference>
<dbReference type="GO" id="GO:0000902">
    <property type="term" value="P:cell morphogenesis"/>
    <property type="evidence" value="ECO:0000315"/>
    <property type="project" value="MGI"/>
</dbReference>
<dbReference type="GO" id="GO:0007566">
    <property type="term" value="P:embryo implantation"/>
    <property type="evidence" value="ECO:0000315"/>
    <property type="project" value="MGI"/>
</dbReference>
<dbReference type="GO" id="GO:0040029">
    <property type="term" value="P:epigenetic regulation of gene expression"/>
    <property type="evidence" value="ECO:0000316"/>
    <property type="project" value="MGI"/>
</dbReference>
<dbReference type="GO" id="GO:0009566">
    <property type="term" value="P:fertilization"/>
    <property type="evidence" value="ECO:0000315"/>
    <property type="project" value="MGI"/>
</dbReference>
<dbReference type="GO" id="GO:0008543">
    <property type="term" value="P:fibroblast growth factor receptor signaling pathway"/>
    <property type="evidence" value="ECO:0000315"/>
    <property type="project" value="MGI"/>
</dbReference>
<dbReference type="GO" id="GO:0007281">
    <property type="term" value="P:germ cell development"/>
    <property type="evidence" value="ECO:0000315"/>
    <property type="project" value="UniProtKB"/>
</dbReference>
<dbReference type="GO" id="GO:0030718">
    <property type="term" value="P:germ-line stem cell population maintenance"/>
    <property type="evidence" value="ECO:0000315"/>
    <property type="project" value="MGI"/>
</dbReference>
<dbReference type="GO" id="GO:0048873">
    <property type="term" value="P:homeostasis of number of cells within a tissue"/>
    <property type="evidence" value="ECO:0000315"/>
    <property type="project" value="MGI"/>
</dbReference>
<dbReference type="GO" id="GO:0060818">
    <property type="term" value="P:inactivation of paternal X chromosome by genomic imprinting"/>
    <property type="evidence" value="ECO:0000315"/>
    <property type="project" value="MGI"/>
</dbReference>
<dbReference type="GO" id="GO:0001827">
    <property type="term" value="P:inner cell mass cell fate commitment"/>
    <property type="evidence" value="ECO:0000314"/>
    <property type="project" value="MGI"/>
</dbReference>
<dbReference type="GO" id="GO:0032259">
    <property type="term" value="P:methylation"/>
    <property type="evidence" value="ECO:0007669"/>
    <property type="project" value="UniProtKB-KW"/>
</dbReference>
<dbReference type="GO" id="GO:0040037">
    <property type="term" value="P:negative regulation of fibroblast growth factor receptor signaling pathway"/>
    <property type="evidence" value="ECO:0000315"/>
    <property type="project" value="MGI"/>
</dbReference>
<dbReference type="GO" id="GO:0045814">
    <property type="term" value="P:negative regulation of gene expression, epigenetic"/>
    <property type="evidence" value="ECO:0000315"/>
    <property type="project" value="MGI"/>
</dbReference>
<dbReference type="GO" id="GO:0000122">
    <property type="term" value="P:negative regulation of transcription by RNA polymerase II"/>
    <property type="evidence" value="ECO:0000315"/>
    <property type="project" value="MGI"/>
</dbReference>
<dbReference type="GO" id="GO:1902093">
    <property type="term" value="P:positive regulation of flagellated sperm motility"/>
    <property type="evidence" value="ECO:0000315"/>
    <property type="project" value="UniProtKB"/>
</dbReference>
<dbReference type="GO" id="GO:1902459">
    <property type="term" value="P:positive regulation of stem cell population maintenance"/>
    <property type="evidence" value="ECO:0000315"/>
    <property type="project" value="UniProtKB"/>
</dbReference>
<dbReference type="GO" id="GO:0010468">
    <property type="term" value="P:regulation of gene expression"/>
    <property type="evidence" value="ECO:0000315"/>
    <property type="project" value="MGI"/>
</dbReference>
<dbReference type="GO" id="GO:0019827">
    <property type="term" value="P:stem cell population maintenance"/>
    <property type="evidence" value="ECO:0000315"/>
    <property type="project" value="MGI"/>
</dbReference>
<dbReference type="CDD" id="cd19198">
    <property type="entry name" value="PR-SET_PRDM14"/>
    <property type="match status" value="1"/>
</dbReference>
<dbReference type="FunFam" id="2.170.270.10:FF:000032">
    <property type="entry name" value="PR domain containing 14"/>
    <property type="match status" value="1"/>
</dbReference>
<dbReference type="FunFam" id="3.30.160.60:FF:000905">
    <property type="entry name" value="PR domain containing 14"/>
    <property type="match status" value="1"/>
</dbReference>
<dbReference type="FunFam" id="3.30.160.60:FF:001029">
    <property type="entry name" value="PR domain containing 14"/>
    <property type="match status" value="1"/>
</dbReference>
<dbReference type="FunFam" id="3.30.160.60:FF:000450">
    <property type="entry name" value="PR domain zinc finger protein 14"/>
    <property type="match status" value="1"/>
</dbReference>
<dbReference type="FunFam" id="3.30.160.60:FF:000480">
    <property type="entry name" value="PR domain zinc finger protein 14"/>
    <property type="match status" value="1"/>
</dbReference>
<dbReference type="Gene3D" id="3.30.160.60">
    <property type="entry name" value="Classic Zinc Finger"/>
    <property type="match status" value="4"/>
</dbReference>
<dbReference type="Gene3D" id="2.170.270.10">
    <property type="entry name" value="SET domain"/>
    <property type="match status" value="1"/>
</dbReference>
<dbReference type="InterPro" id="IPR044408">
    <property type="entry name" value="PRDM14_PR-SET"/>
</dbReference>
<dbReference type="InterPro" id="IPR001214">
    <property type="entry name" value="SET_dom"/>
</dbReference>
<dbReference type="InterPro" id="IPR046341">
    <property type="entry name" value="SET_dom_sf"/>
</dbReference>
<dbReference type="InterPro" id="IPR050331">
    <property type="entry name" value="Zinc_finger"/>
</dbReference>
<dbReference type="InterPro" id="IPR036236">
    <property type="entry name" value="Znf_C2H2_sf"/>
</dbReference>
<dbReference type="InterPro" id="IPR013087">
    <property type="entry name" value="Znf_C2H2_type"/>
</dbReference>
<dbReference type="PANTHER" id="PTHR16515">
    <property type="entry name" value="PR DOMAIN ZINC FINGER PROTEIN"/>
    <property type="match status" value="1"/>
</dbReference>
<dbReference type="PANTHER" id="PTHR16515:SF19">
    <property type="entry name" value="PR DOMAIN ZINC FINGER PROTEIN 14"/>
    <property type="match status" value="1"/>
</dbReference>
<dbReference type="Pfam" id="PF21549">
    <property type="entry name" value="PRDM2_PR"/>
    <property type="match status" value="1"/>
</dbReference>
<dbReference type="Pfam" id="PF00096">
    <property type="entry name" value="zf-C2H2"/>
    <property type="match status" value="1"/>
</dbReference>
<dbReference type="SMART" id="SM00317">
    <property type="entry name" value="SET"/>
    <property type="match status" value="1"/>
</dbReference>
<dbReference type="SMART" id="SM00355">
    <property type="entry name" value="ZnF_C2H2"/>
    <property type="match status" value="6"/>
</dbReference>
<dbReference type="SUPFAM" id="SSF57667">
    <property type="entry name" value="beta-beta-alpha zinc fingers"/>
    <property type="match status" value="3"/>
</dbReference>
<dbReference type="SUPFAM" id="SSF82199">
    <property type="entry name" value="SET domain"/>
    <property type="match status" value="1"/>
</dbReference>
<dbReference type="PROSITE" id="PS50280">
    <property type="entry name" value="SET"/>
    <property type="match status" value="1"/>
</dbReference>
<dbReference type="PROSITE" id="PS00028">
    <property type="entry name" value="ZINC_FINGER_C2H2_1"/>
    <property type="match status" value="5"/>
</dbReference>
<dbReference type="PROSITE" id="PS50157">
    <property type="entry name" value="ZINC_FINGER_C2H2_2"/>
    <property type="match status" value="6"/>
</dbReference>
<organism>
    <name type="scientific">Mus musculus</name>
    <name type="common">Mouse</name>
    <dbReference type="NCBI Taxonomy" id="10090"/>
    <lineage>
        <taxon>Eukaryota</taxon>
        <taxon>Metazoa</taxon>
        <taxon>Chordata</taxon>
        <taxon>Craniata</taxon>
        <taxon>Vertebrata</taxon>
        <taxon>Euteleostomi</taxon>
        <taxon>Mammalia</taxon>
        <taxon>Eutheria</taxon>
        <taxon>Euarchontoglires</taxon>
        <taxon>Glires</taxon>
        <taxon>Rodentia</taxon>
        <taxon>Myomorpha</taxon>
        <taxon>Muroidea</taxon>
        <taxon>Muridae</taxon>
        <taxon>Murinae</taxon>
        <taxon>Mus</taxon>
        <taxon>Mus</taxon>
    </lineage>
</organism>
<gene>
    <name type="primary">Prdm14</name>
</gene>
<sequence>MALPPSGETQSQDKANYLPQSNPHHLTTYYAHAPGYSHFRNLATTEEEFQPWKLAAAVLESQAMAPLDAFRMTAPLLNPGLAVQSEPLYNLPWYKLSPWNRIPQFTPEVPRFLDSTEHRSSGSSNQNLVLGGGGGQISGQRWEAENLLLPSPVIASLLPDGIKSSQSISVPQTLNQEGKLPFCGFNFTEEELSFVLYGAIASPEHPTDLQHAISGILVPTESSGSNHLHKTLDKDSLQLPEGLCLMQTSFGDVPHFGVFCSDFIAKGVRFGPFRGRVVNASEVKAHRDNSRMWEIFEDGHLSHFIDGKGSGNWMSYVNCARFPKEQNLLAVQHQGQIFYESCRDIQRNQELLVWYGNGYEKFLGVPMNLRVTEQGGQQLSESSEESAEGYRCERCGKVFTYKYYRDKHLKYTPCVDKGDRKFPCSLCQRSFEKRDRLRIHILHVHERHRPYLCSTCGKSFSQSSSLNKHMRVHSGDRPYQCVYCTKKFTASSILRTHIRQHSGEKPFKCKHCGKAFASHAAHDSHVRRSHKDNGRSSCDICGKGFLDQEAFYAHMRLHKTC</sequence>
<comment type="function">
    <text evidence="1 5 7">Transcription factor that has both positive and negative roles on transcription (By similarity). Plays a role in cellular pluripotency. Essential for germ cell development at 2 levels: the reacquisition of potential pluripotency, including SOX2 up-regulation, and successful epigenetic reprogramming, characterized by EHMT1 repression. Its association with CBFA2T2 is required for the functions in pluripotency and germ cell formation.</text>
</comment>
<comment type="subunit">
    <text evidence="7 8">Interacts with CBFA2T2.</text>
</comment>
<comment type="subcellular location">
    <subcellularLocation>
        <location evidence="1">Nucleus</location>
    </subcellularLocation>
</comment>
<comment type="tissue specificity">
    <text evidence="5 6">Restricted to embryonic stem cells and primordial germ cells. Not detected in epiblast-derived stem cells.</text>
</comment>
<comment type="developmental stage">
    <text evidence="5">At 3.5 dpc, weak and transient expression in the inner cell mass cells of blastocysts. This expression disappears by 5.5 dpc. Expression starts again in committed PGCs around 6.5 dpc in the extraembryonic mesoderm contiguous from the most proximal epiblast (at protein level). Expression persists specifically in PGCs until about 13.5-14.5 dpc both in females and males.</text>
</comment>
<comment type="disruption phenotype">
    <text evidence="5">Mutant mice are born with an expected Mendelian ratio and looked grossly normal. However, both females and males are sterile, ovaries and testes being completely devoid of germ cells.</text>
</comment>
<comment type="similarity">
    <text evidence="3">Belongs to the class V-like SAM-binding methyltransferase superfamily.</text>
</comment>
<name>PRD14_MOUSE</name>
<keyword id="KW-0002">3D-structure</keyword>
<keyword id="KW-0238">DNA-binding</keyword>
<keyword id="KW-0479">Metal-binding</keyword>
<keyword id="KW-0489">Methyltransferase</keyword>
<keyword id="KW-0539">Nucleus</keyword>
<keyword id="KW-1185">Reference proteome</keyword>
<keyword id="KW-0677">Repeat</keyword>
<keyword id="KW-0949">S-adenosyl-L-methionine</keyword>
<keyword id="KW-0804">Transcription</keyword>
<keyword id="KW-0805">Transcription regulation</keyword>
<keyword id="KW-0808">Transferase</keyword>
<keyword id="KW-0862">Zinc</keyword>
<keyword id="KW-0863">Zinc-finger</keyword>
<feature type="chain" id="PRO_0000417666" description="PR domain zinc finger protein 14">
    <location>
        <begin position="1"/>
        <end position="561"/>
    </location>
</feature>
<feature type="domain" description="SET" evidence="3">
    <location>
        <begin position="241"/>
        <end position="356"/>
    </location>
</feature>
<feature type="zinc finger region" description="C2H2-type 1; atypical" evidence="2">
    <location>
        <begin position="390"/>
        <end position="416"/>
    </location>
</feature>
<feature type="zinc finger region" description="C2H2-type 2" evidence="2">
    <location>
        <begin position="422"/>
        <end position="445"/>
    </location>
</feature>
<feature type="zinc finger region" description="C2H2-type 3" evidence="2">
    <location>
        <begin position="451"/>
        <end position="473"/>
    </location>
</feature>
<feature type="zinc finger region" description="C2H2-type 4" evidence="2">
    <location>
        <begin position="479"/>
        <end position="501"/>
    </location>
</feature>
<feature type="zinc finger region" description="C2H2-type 5" evidence="2">
    <location>
        <begin position="507"/>
        <end position="530"/>
    </location>
</feature>
<feature type="zinc finger region" description="C2H2-type 6" evidence="2">
    <location>
        <begin position="536"/>
        <end position="558"/>
    </location>
</feature>
<feature type="region of interest" description="Disordered" evidence="4">
    <location>
        <begin position="1"/>
        <end position="20"/>
    </location>
</feature>
<feature type="region of interest" description="Interaction with CBFA2T2" evidence="7 8">
    <location>
        <begin position="184"/>
        <end position="373"/>
    </location>
</feature>
<feature type="compositionally biased region" description="Polar residues" evidence="4">
    <location>
        <begin position="7"/>
        <end position="20"/>
    </location>
</feature>
<feature type="binding site" evidence="3">
    <location>
        <position position="355"/>
    </location>
    <ligand>
        <name>S-adenosyl-L-methionine</name>
        <dbReference type="ChEBI" id="CHEBI:59789"/>
    </ligand>
</feature>
<feature type="mutagenesis site" description="Impairs interaction with CBFA2T2." evidence="7">
    <original>Y</original>
    <variation>R</variation>
    <location>
        <position position="339"/>
    </location>
</feature>
<feature type="sequence conflict" description="In Ref. 1; BAE24596." evidence="9" ref="1">
    <original>Q</original>
    <variation>E</variation>
    <location>
        <position position="50"/>
    </location>
</feature>
<feature type="sequence conflict" description="In Ref. 1; BAE24596." evidence="9" ref="1">
    <original>Q</original>
    <variation>L</variation>
    <location>
        <position position="326"/>
    </location>
</feature>
<feature type="helix" evidence="10">
    <location>
        <begin position="189"/>
        <end position="197"/>
    </location>
</feature>
<feature type="strand" evidence="10">
    <location>
        <begin position="199"/>
        <end position="201"/>
    </location>
</feature>
<feature type="strand" evidence="10">
    <location>
        <begin position="203"/>
        <end position="205"/>
    </location>
</feature>
<feature type="strand" evidence="10">
    <location>
        <begin position="207"/>
        <end position="209"/>
    </location>
</feature>
<feature type="strand" evidence="10">
    <location>
        <begin position="243"/>
        <end position="250"/>
    </location>
</feature>
<feature type="strand" evidence="10">
    <location>
        <begin position="253"/>
        <end position="262"/>
    </location>
</feature>
<feature type="strand" evidence="10">
    <location>
        <begin position="276"/>
        <end position="279"/>
    </location>
</feature>
<feature type="strand" evidence="10">
    <location>
        <begin position="292"/>
        <end position="297"/>
    </location>
</feature>
<feature type="strand" evidence="10">
    <location>
        <begin position="300"/>
        <end position="306"/>
    </location>
</feature>
<feature type="helix" evidence="10">
    <location>
        <begin position="313"/>
        <end position="316"/>
    </location>
</feature>
<feature type="helix" evidence="10">
    <location>
        <begin position="323"/>
        <end position="325"/>
    </location>
</feature>
<feature type="strand" evidence="10">
    <location>
        <begin position="328"/>
        <end position="333"/>
    </location>
</feature>
<feature type="strand" evidence="10">
    <location>
        <begin position="336"/>
        <end position="343"/>
    </location>
</feature>
<feature type="strand" evidence="10">
    <location>
        <begin position="352"/>
        <end position="355"/>
    </location>
</feature>
<feature type="strand" evidence="10">
    <location>
        <begin position="359"/>
        <end position="362"/>
    </location>
</feature>
<feature type="strand" evidence="10">
    <location>
        <begin position="365"/>
        <end position="368"/>
    </location>
</feature>
<proteinExistence type="evidence at protein level"/>